<keyword id="KW-0687">Ribonucleoprotein</keyword>
<keyword id="KW-0689">Ribosomal protein</keyword>
<keyword id="KW-0694">RNA-binding</keyword>
<keyword id="KW-0699">rRNA-binding</keyword>
<evidence type="ECO:0000255" key="1">
    <source>
        <dbReference type="HAMAP-Rule" id="MF_00270"/>
    </source>
</evidence>
<evidence type="ECO:0000305" key="2"/>
<accession>A0PWM1</accession>
<gene>
    <name evidence="1" type="primary">rpsR2</name>
    <name type="ordered locus">MUL_4834</name>
</gene>
<dbReference type="EMBL" id="CP000325">
    <property type="protein sequence ID" value="ABL06740.1"/>
    <property type="molecule type" value="Genomic_DNA"/>
</dbReference>
<dbReference type="SMR" id="A0PWM1"/>
<dbReference type="KEGG" id="mul:MUL_4834"/>
<dbReference type="eggNOG" id="COG0238">
    <property type="taxonomic scope" value="Bacteria"/>
</dbReference>
<dbReference type="HOGENOM" id="CLU_148710_1_0_11"/>
<dbReference type="Proteomes" id="UP000000765">
    <property type="component" value="Chromosome"/>
</dbReference>
<dbReference type="GO" id="GO:0022627">
    <property type="term" value="C:cytosolic small ribosomal subunit"/>
    <property type="evidence" value="ECO:0007669"/>
    <property type="project" value="TreeGrafter"/>
</dbReference>
<dbReference type="GO" id="GO:0070181">
    <property type="term" value="F:small ribosomal subunit rRNA binding"/>
    <property type="evidence" value="ECO:0007669"/>
    <property type="project" value="TreeGrafter"/>
</dbReference>
<dbReference type="GO" id="GO:0003735">
    <property type="term" value="F:structural constituent of ribosome"/>
    <property type="evidence" value="ECO:0007669"/>
    <property type="project" value="InterPro"/>
</dbReference>
<dbReference type="GO" id="GO:0006412">
    <property type="term" value="P:translation"/>
    <property type="evidence" value="ECO:0007669"/>
    <property type="project" value="UniProtKB-UniRule"/>
</dbReference>
<dbReference type="FunFam" id="4.10.640.10:FF:000016">
    <property type="entry name" value="30S ribosomal protein S18"/>
    <property type="match status" value="1"/>
</dbReference>
<dbReference type="Gene3D" id="4.10.640.10">
    <property type="entry name" value="Ribosomal protein S18"/>
    <property type="match status" value="1"/>
</dbReference>
<dbReference type="HAMAP" id="MF_00270">
    <property type="entry name" value="Ribosomal_bS18"/>
    <property type="match status" value="1"/>
</dbReference>
<dbReference type="InterPro" id="IPR001648">
    <property type="entry name" value="Ribosomal_bS18"/>
</dbReference>
<dbReference type="InterPro" id="IPR018275">
    <property type="entry name" value="Ribosomal_bS18_CS"/>
</dbReference>
<dbReference type="InterPro" id="IPR036870">
    <property type="entry name" value="Ribosomal_bS18_sf"/>
</dbReference>
<dbReference type="NCBIfam" id="TIGR00165">
    <property type="entry name" value="S18"/>
    <property type="match status" value="1"/>
</dbReference>
<dbReference type="PANTHER" id="PTHR13479">
    <property type="entry name" value="30S RIBOSOMAL PROTEIN S18"/>
    <property type="match status" value="1"/>
</dbReference>
<dbReference type="PANTHER" id="PTHR13479:SF40">
    <property type="entry name" value="SMALL RIBOSOMAL SUBUNIT PROTEIN BS18M"/>
    <property type="match status" value="1"/>
</dbReference>
<dbReference type="Pfam" id="PF01084">
    <property type="entry name" value="Ribosomal_S18"/>
    <property type="match status" value="1"/>
</dbReference>
<dbReference type="PRINTS" id="PR00974">
    <property type="entry name" value="RIBOSOMALS18"/>
</dbReference>
<dbReference type="SUPFAM" id="SSF46911">
    <property type="entry name" value="Ribosomal protein S18"/>
    <property type="match status" value="1"/>
</dbReference>
<dbReference type="PROSITE" id="PS00057">
    <property type="entry name" value="RIBOSOMAL_S18"/>
    <property type="match status" value="1"/>
</dbReference>
<name>RS182_MYCUA</name>
<organism>
    <name type="scientific">Mycobacterium ulcerans (strain Agy99)</name>
    <dbReference type="NCBI Taxonomy" id="362242"/>
    <lineage>
        <taxon>Bacteria</taxon>
        <taxon>Bacillati</taxon>
        <taxon>Actinomycetota</taxon>
        <taxon>Actinomycetes</taxon>
        <taxon>Mycobacteriales</taxon>
        <taxon>Mycobacteriaceae</taxon>
        <taxon>Mycobacterium</taxon>
        <taxon>Mycobacterium ulcerans group</taxon>
    </lineage>
</organism>
<feature type="chain" id="PRO_0000345509" description="Small ribosomal subunit protein bS18B">
    <location>
        <begin position="1"/>
        <end position="87"/>
    </location>
</feature>
<protein>
    <recommendedName>
        <fullName evidence="1">Small ribosomal subunit protein bS18B</fullName>
    </recommendedName>
    <alternativeName>
        <fullName evidence="2">30S ribosomal protein S18 2</fullName>
    </alternativeName>
</protein>
<proteinExistence type="inferred from homology"/>
<comment type="function">
    <text evidence="1">Binds as a heterodimer with protein bS6 to the central domain of the 16S rRNA, where it helps stabilize the platform of the 30S subunit.</text>
</comment>
<comment type="subunit">
    <text evidence="1">Part of the 30S ribosomal subunit. Forms a tight heterodimer with protein bS6.</text>
</comment>
<comment type="similarity">
    <text evidence="1">Belongs to the bacterial ribosomal protein bS18 family.</text>
</comment>
<sequence>MKKKPRRTRRPIAAPATPAKKNLLDSLGVSEVDYKDISRLRTFISDRGKIRSRRVTGLTVQQQRQIATAIKNAREMALLPYPASRPQ</sequence>
<reference key="1">
    <citation type="journal article" date="2007" name="Genome Res.">
        <title>Reductive evolution and niche adaptation inferred from the genome of Mycobacterium ulcerans, the causative agent of Buruli ulcer.</title>
        <authorList>
            <person name="Stinear T.P."/>
            <person name="Seemann T."/>
            <person name="Pidot S."/>
            <person name="Frigui W."/>
            <person name="Reysset G."/>
            <person name="Garnier T."/>
            <person name="Meurice G."/>
            <person name="Simon D."/>
            <person name="Bouchier C."/>
            <person name="Ma L."/>
            <person name="Tichit M."/>
            <person name="Porter J.L."/>
            <person name="Ryan J."/>
            <person name="Johnson P.D.R."/>
            <person name="Davies J.K."/>
            <person name="Jenkin G.A."/>
            <person name="Small P.L.C."/>
            <person name="Jones L.M."/>
            <person name="Tekaia F."/>
            <person name="Laval F."/>
            <person name="Daffe M."/>
            <person name="Parkhill J."/>
            <person name="Cole S.T."/>
        </authorList>
    </citation>
    <scope>NUCLEOTIDE SEQUENCE [LARGE SCALE GENOMIC DNA]</scope>
    <source>
        <strain>Agy99</strain>
    </source>
</reference>